<protein>
    <recommendedName>
        <fullName evidence="1">Sodium channel regulatory subunit beta-4</fullName>
    </recommendedName>
</protein>
<reference key="1">
    <citation type="submission" date="2006-09" db="EMBL/GenBank/DDBJ databases">
        <authorList>
            <consortium name="NIH - Mammalian Gene Collection (MGC) project"/>
        </authorList>
    </citation>
    <scope>NUCLEOTIDE SEQUENCE [LARGE SCALE MRNA]</scope>
    <source>
        <strain>Hereford</strain>
        <tissue>Brain cortex</tissue>
    </source>
</reference>
<feature type="signal peptide" evidence="2">
    <location>
        <begin position="1"/>
        <end position="30"/>
    </location>
</feature>
<feature type="chain" id="PRO_0000309745" description="Sodium channel regulatory subunit beta-4">
    <location>
        <begin position="31"/>
        <end position="228"/>
    </location>
</feature>
<feature type="topological domain" description="Extracellular" evidence="2">
    <location>
        <begin position="31"/>
        <end position="162"/>
    </location>
</feature>
<feature type="transmembrane region" description="Helical" evidence="2">
    <location>
        <begin position="163"/>
        <end position="183"/>
    </location>
</feature>
<feature type="topological domain" description="Cytoplasmic" evidence="2">
    <location>
        <begin position="184"/>
        <end position="228"/>
    </location>
</feature>
<feature type="domain" description="Ig-like C2-type" evidence="3">
    <location>
        <begin position="31"/>
        <end position="148"/>
    </location>
</feature>
<feature type="region of interest" description="Disordered" evidence="4">
    <location>
        <begin position="198"/>
        <end position="228"/>
    </location>
</feature>
<feature type="compositionally biased region" description="Polar residues" evidence="4">
    <location>
        <begin position="203"/>
        <end position="213"/>
    </location>
</feature>
<feature type="compositionally biased region" description="Basic and acidic residues" evidence="4">
    <location>
        <begin position="219"/>
        <end position="228"/>
    </location>
</feature>
<feature type="glycosylation site" description="N-linked (GlcNAc...) asparagine" evidence="2">
    <location>
        <position position="45"/>
    </location>
</feature>
<feature type="glycosylation site" description="N-linked (GlcNAc...) asparagine" evidence="2">
    <location>
        <position position="71"/>
    </location>
</feature>
<feature type="glycosylation site" description="N-linked (GlcNAc...) asparagine" evidence="2">
    <location>
        <position position="113"/>
    </location>
</feature>
<feature type="disulfide bond" evidence="3">
    <location>
        <begin position="53"/>
        <end position="131"/>
    </location>
</feature>
<feature type="disulfide bond" description="Interchain; with alpha subunit" evidence="3">
    <location>
        <position position="58"/>
    </location>
</feature>
<dbReference type="EMBL" id="BC123479">
    <property type="protein sequence ID" value="AAI23480.1"/>
    <property type="molecule type" value="mRNA"/>
</dbReference>
<dbReference type="RefSeq" id="NP_001070380.1">
    <property type="nucleotide sequence ID" value="NM_001076912.1"/>
</dbReference>
<dbReference type="SMR" id="Q08E08"/>
<dbReference type="FunCoup" id="Q08E08">
    <property type="interactions" value="470"/>
</dbReference>
<dbReference type="STRING" id="9913.ENSBTAP00000017826"/>
<dbReference type="GlyCosmos" id="Q08E08">
    <property type="glycosylation" value="3 sites, No reported glycans"/>
</dbReference>
<dbReference type="GlyGen" id="Q08E08">
    <property type="glycosylation" value="3 sites"/>
</dbReference>
<dbReference type="PaxDb" id="9913-ENSBTAP00000017826"/>
<dbReference type="Ensembl" id="ENSBTAT00000017826.7">
    <property type="protein sequence ID" value="ENSBTAP00000017826.5"/>
    <property type="gene ID" value="ENSBTAG00000039340.4"/>
</dbReference>
<dbReference type="GeneID" id="538100"/>
<dbReference type="KEGG" id="bta:538100"/>
<dbReference type="CTD" id="6330"/>
<dbReference type="VEuPathDB" id="HostDB:ENSBTAG00000039340"/>
<dbReference type="VGNC" id="VGNC:34351">
    <property type="gene designation" value="SCN4B"/>
</dbReference>
<dbReference type="eggNOG" id="ENOG502QTZ6">
    <property type="taxonomic scope" value="Eukaryota"/>
</dbReference>
<dbReference type="GeneTree" id="ENSGT01030000234556"/>
<dbReference type="HOGENOM" id="CLU_104235_0_0_1"/>
<dbReference type="InParanoid" id="Q08E08"/>
<dbReference type="OMA" id="HQATIIL"/>
<dbReference type="OrthoDB" id="8778219at2759"/>
<dbReference type="TreeFam" id="TF331728"/>
<dbReference type="Reactome" id="R-BTA-5576892">
    <property type="pathway name" value="Phase 0 - rapid depolarisation"/>
</dbReference>
<dbReference type="Proteomes" id="UP000009136">
    <property type="component" value="Chromosome 15"/>
</dbReference>
<dbReference type="Bgee" id="ENSBTAG00000039340">
    <property type="expression patterns" value="Expressed in longissimus thoracis muscle and 93 other cell types or tissues"/>
</dbReference>
<dbReference type="GO" id="GO:0014704">
    <property type="term" value="C:intercalated disc"/>
    <property type="evidence" value="ECO:0007669"/>
    <property type="project" value="Ensembl"/>
</dbReference>
<dbReference type="GO" id="GO:0005886">
    <property type="term" value="C:plasma membrane"/>
    <property type="evidence" value="ECO:0000250"/>
    <property type="project" value="UniProtKB"/>
</dbReference>
<dbReference type="GO" id="GO:0001518">
    <property type="term" value="C:voltage-gated sodium channel complex"/>
    <property type="evidence" value="ECO:0000250"/>
    <property type="project" value="UniProtKB"/>
</dbReference>
<dbReference type="GO" id="GO:0017080">
    <property type="term" value="F:sodium channel regulator activity"/>
    <property type="evidence" value="ECO:0000250"/>
    <property type="project" value="UniProtKB"/>
</dbReference>
<dbReference type="GO" id="GO:0044325">
    <property type="term" value="F:transmembrane transporter binding"/>
    <property type="evidence" value="ECO:0000318"/>
    <property type="project" value="GO_Central"/>
</dbReference>
<dbReference type="GO" id="GO:0086006">
    <property type="term" value="F:voltage-gated sodium channel activity involved in cardiac muscle cell action potential"/>
    <property type="evidence" value="ECO:0007669"/>
    <property type="project" value="Ensembl"/>
</dbReference>
<dbReference type="GO" id="GO:0086016">
    <property type="term" value="P:AV node cell action potential"/>
    <property type="evidence" value="ECO:0007669"/>
    <property type="project" value="Ensembl"/>
</dbReference>
<dbReference type="GO" id="GO:0061337">
    <property type="term" value="P:cardiac conduction"/>
    <property type="evidence" value="ECO:0000318"/>
    <property type="project" value="GO_Central"/>
</dbReference>
<dbReference type="GO" id="GO:0086002">
    <property type="term" value="P:cardiac muscle cell action potential involved in contraction"/>
    <property type="evidence" value="ECO:0000318"/>
    <property type="project" value="GO_Central"/>
</dbReference>
<dbReference type="GO" id="GO:0051649">
    <property type="term" value="P:establishment of localization in cell"/>
    <property type="evidence" value="ECO:0007669"/>
    <property type="project" value="Ensembl"/>
</dbReference>
<dbReference type="GO" id="GO:0086012">
    <property type="term" value="P:membrane depolarization during cardiac muscle cell action potential"/>
    <property type="evidence" value="ECO:0000318"/>
    <property type="project" value="GO_Central"/>
</dbReference>
<dbReference type="GO" id="GO:0019228">
    <property type="term" value="P:neuronal action potential"/>
    <property type="evidence" value="ECO:0000250"/>
    <property type="project" value="UniProtKB"/>
</dbReference>
<dbReference type="GO" id="GO:0010765">
    <property type="term" value="P:positive regulation of sodium ion transport"/>
    <property type="evidence" value="ECO:0007669"/>
    <property type="project" value="Ensembl"/>
</dbReference>
<dbReference type="GO" id="GO:0086091">
    <property type="term" value="P:regulation of heart rate by cardiac conduction"/>
    <property type="evidence" value="ECO:0007669"/>
    <property type="project" value="Ensembl"/>
</dbReference>
<dbReference type="GO" id="GO:0060307">
    <property type="term" value="P:regulation of ventricular cardiac muscle cell membrane repolarization"/>
    <property type="evidence" value="ECO:0000318"/>
    <property type="project" value="GO_Central"/>
</dbReference>
<dbReference type="CDD" id="cd12087">
    <property type="entry name" value="TM_EGFR-like"/>
    <property type="match status" value="1"/>
</dbReference>
<dbReference type="FunFam" id="2.60.40.10:FF:001260">
    <property type="entry name" value="Sodium channel subunit beta-4"/>
    <property type="match status" value="1"/>
</dbReference>
<dbReference type="Gene3D" id="2.60.40.10">
    <property type="entry name" value="Immunoglobulins"/>
    <property type="match status" value="1"/>
</dbReference>
<dbReference type="InterPro" id="IPR007110">
    <property type="entry name" value="Ig-like_dom"/>
</dbReference>
<dbReference type="InterPro" id="IPR036179">
    <property type="entry name" value="Ig-like_dom_sf"/>
</dbReference>
<dbReference type="InterPro" id="IPR013783">
    <property type="entry name" value="Ig-like_fold"/>
</dbReference>
<dbReference type="InterPro" id="IPR003599">
    <property type="entry name" value="Ig_sub"/>
</dbReference>
<dbReference type="InterPro" id="IPR013106">
    <property type="entry name" value="Ig_V-set"/>
</dbReference>
<dbReference type="InterPro" id="IPR000920">
    <property type="entry name" value="Myelin_P0-rel"/>
</dbReference>
<dbReference type="PANTHER" id="PTHR13869">
    <property type="entry name" value="MYELIN P0 RELATED"/>
    <property type="match status" value="1"/>
</dbReference>
<dbReference type="PANTHER" id="PTHR13869:SF14">
    <property type="entry name" value="SODIUM CHANNEL SUBUNIT BETA-4"/>
    <property type="match status" value="1"/>
</dbReference>
<dbReference type="Pfam" id="PF07686">
    <property type="entry name" value="V-set"/>
    <property type="match status" value="1"/>
</dbReference>
<dbReference type="SMART" id="SM00409">
    <property type="entry name" value="IG"/>
    <property type="match status" value="1"/>
</dbReference>
<dbReference type="SUPFAM" id="SSF48726">
    <property type="entry name" value="Immunoglobulin"/>
    <property type="match status" value="1"/>
</dbReference>
<dbReference type="PROSITE" id="PS50835">
    <property type="entry name" value="IG_LIKE"/>
    <property type="match status" value="1"/>
</dbReference>
<gene>
    <name evidence="1" type="primary">SCN4B</name>
</gene>
<keyword id="KW-1003">Cell membrane</keyword>
<keyword id="KW-1015">Disulfide bond</keyword>
<keyword id="KW-0325">Glycoprotein</keyword>
<keyword id="KW-0393">Immunoglobulin domain</keyword>
<keyword id="KW-0406">Ion transport</keyword>
<keyword id="KW-0472">Membrane</keyword>
<keyword id="KW-1185">Reference proteome</keyword>
<keyword id="KW-0732">Signal</keyword>
<keyword id="KW-0915">Sodium</keyword>
<keyword id="KW-0739">Sodium transport</keyword>
<keyword id="KW-0812">Transmembrane</keyword>
<keyword id="KW-1133">Transmembrane helix</keyword>
<keyword id="KW-0813">Transport</keyword>
<sequence length="228" mass="25144">MPGARDQGAARARWLGIGLLGLFLLPVSLSLEVSVGKATTIYAVNGTEILLPCTFSSCFGFENLHFWWSYNSSDTYKILIDGTVKNEKSDPKVKLKDDDRITLEGSTKEKMNNISISLKNLEFSDTGKYTCHVKNPKENDFQHQATIFLQVVDKLEEVDNTVTLIILGVVGGVIGLLIFILLVKKFIAFIIKKTQEKKKECLVSSSGNDNTENGLPGSKAEEKAPTKV</sequence>
<evidence type="ECO:0000250" key="1">
    <source>
        <dbReference type="UniProtKB" id="Q8IWT1"/>
    </source>
</evidence>
<evidence type="ECO:0000255" key="2"/>
<evidence type="ECO:0000255" key="3">
    <source>
        <dbReference type="PROSITE-ProRule" id="PRU00114"/>
    </source>
</evidence>
<evidence type="ECO:0000256" key="4">
    <source>
        <dbReference type="SAM" id="MobiDB-lite"/>
    </source>
</evidence>
<evidence type="ECO:0000305" key="5"/>
<accession>Q08E08</accession>
<proteinExistence type="evidence at transcript level"/>
<comment type="function">
    <text evidence="1">Regulatory subunit of multiple voltage-gated sodium (Nav) channels directly mediating the depolarization of excitable membranes. Navs, also called VGSCs (voltage-gated sodium channels) or VDSCs (voltage-dependent sodium channels), operate by switching between closed and open conformations depending on the voltage difference across the membrane. In the open conformation they allow Na(+) ions to selectively pass through the pore, along their electrochemical gradient. The influx of Na+ ions provokes membrane depolarization, initiating the propagation of electrical signals throughout cells and tissues. The accessory beta subunits participate in localization and functional modulation of the Nav channels. Modulates the activity of SCN1A/Nav1.1. Modulates the activity of SCN2A/Nav1.2.</text>
</comment>
<comment type="subunit">
    <text evidence="1">A voltage-gated sodium (Nav) channel consists of an ion-conducting pore-forming alpha subunit functional on its own that is regulated by one or more beta subunits. The beta subunit SCN4B is disulfide-linked to the pore-forming alpha subunit. Interacts with SCN1A; regulatory subunit of SCN1A/Nav1.1. Interacts with SCN2A; regulatory subunit of SCN2A/Nav1.2.</text>
</comment>
<comment type="subcellular location">
    <subcellularLocation>
        <location evidence="1">Cell membrane</location>
        <topology evidence="1">Single-pass type I membrane protein</topology>
    </subcellularLocation>
</comment>
<comment type="PTM">
    <text evidence="1">Contains an interchain disulfide bond with SCN2A.</text>
</comment>
<comment type="similarity">
    <text evidence="5">Belongs to the sodium channel auxiliary subunit SCN4B (TC 8.A.17) family.</text>
</comment>
<organism>
    <name type="scientific">Bos taurus</name>
    <name type="common">Bovine</name>
    <dbReference type="NCBI Taxonomy" id="9913"/>
    <lineage>
        <taxon>Eukaryota</taxon>
        <taxon>Metazoa</taxon>
        <taxon>Chordata</taxon>
        <taxon>Craniata</taxon>
        <taxon>Vertebrata</taxon>
        <taxon>Euteleostomi</taxon>
        <taxon>Mammalia</taxon>
        <taxon>Eutheria</taxon>
        <taxon>Laurasiatheria</taxon>
        <taxon>Artiodactyla</taxon>
        <taxon>Ruminantia</taxon>
        <taxon>Pecora</taxon>
        <taxon>Bovidae</taxon>
        <taxon>Bovinae</taxon>
        <taxon>Bos</taxon>
    </lineage>
</organism>
<name>SCN4B_BOVIN</name>